<evidence type="ECO:0000250" key="1">
    <source>
        <dbReference type="UniProtKB" id="P46029"/>
    </source>
</evidence>
<evidence type="ECO:0000250" key="2">
    <source>
        <dbReference type="UniProtKB" id="Q16348"/>
    </source>
</evidence>
<evidence type="ECO:0000250" key="3">
    <source>
        <dbReference type="UniProtKB" id="Q9ES07"/>
    </source>
</evidence>
<evidence type="ECO:0000255" key="4"/>
<evidence type="ECO:0000255" key="5">
    <source>
        <dbReference type="PROSITE-ProRule" id="PRU00498"/>
    </source>
</evidence>
<evidence type="ECO:0000256" key="6">
    <source>
        <dbReference type="SAM" id="MobiDB-lite"/>
    </source>
</evidence>
<evidence type="ECO:0000269" key="7">
    <source>
    </source>
</evidence>
<evidence type="ECO:0000269" key="8">
    <source>
    </source>
</evidence>
<evidence type="ECO:0000269" key="9">
    <source>
    </source>
</evidence>
<evidence type="ECO:0000269" key="10">
    <source>
    </source>
</evidence>
<evidence type="ECO:0000269" key="11">
    <source>
    </source>
</evidence>
<evidence type="ECO:0000303" key="12">
    <source>
    </source>
</evidence>
<evidence type="ECO:0000303" key="13">
    <source>
    </source>
</evidence>
<evidence type="ECO:0000305" key="14"/>
<evidence type="ECO:0000305" key="15">
    <source>
    </source>
</evidence>
<evidence type="ECO:0000305" key="16">
    <source>
    </source>
</evidence>
<evidence type="ECO:0000312" key="17">
    <source>
        <dbReference type="RGD" id="61972"/>
    </source>
</evidence>
<evidence type="ECO:0007744" key="18">
    <source>
        <dbReference type="PDB" id="5A9H"/>
    </source>
</evidence>
<evidence type="ECO:0007744" key="19">
    <source>
        <dbReference type="PDB" id="5A9I"/>
    </source>
</evidence>
<evidence type="ECO:0007744" key="20">
    <source>
        <dbReference type="PDB" id="7NQK"/>
    </source>
</evidence>
<evidence type="ECO:0007744" key="21">
    <source>
    </source>
</evidence>
<evidence type="ECO:0007829" key="22">
    <source>
        <dbReference type="PDB" id="5A9H"/>
    </source>
</evidence>
<evidence type="ECO:0007829" key="23">
    <source>
        <dbReference type="PDB" id="5A9I"/>
    </source>
</evidence>
<evidence type="ECO:0007829" key="24">
    <source>
        <dbReference type="PDB" id="7NQK"/>
    </source>
</evidence>
<evidence type="ECO:0007829" key="25">
    <source>
        <dbReference type="PDB" id="9BIS"/>
    </source>
</evidence>
<evidence type="ECO:0007829" key="26">
    <source>
        <dbReference type="PDB" id="9BIU"/>
    </source>
</evidence>
<gene>
    <name evidence="17" type="primary">Slc15a2</name>
    <name evidence="13" type="synonym">Pept2</name>
</gene>
<accession>Q63424</accession>
<dbReference type="EMBL" id="D63149">
    <property type="protein sequence ID" value="BAA09631.1"/>
    <property type="molecule type" value="mRNA"/>
</dbReference>
<dbReference type="PDB" id="5A9H">
    <property type="method" value="X-ray"/>
    <property type="resolution" value="2.06 A"/>
    <property type="chains" value="A=410-601"/>
</dbReference>
<dbReference type="PDB" id="5A9I">
    <property type="method" value="X-ray"/>
    <property type="resolution" value="2.84 A"/>
    <property type="chains" value="A/B/C=410-601"/>
</dbReference>
<dbReference type="PDB" id="7NQK">
    <property type="method" value="EM"/>
    <property type="resolution" value="3.50 A"/>
    <property type="chains" value="A=1-729"/>
</dbReference>
<dbReference type="PDB" id="9BIR">
    <property type="method" value="EM"/>
    <property type="resolution" value="3.10 A"/>
    <property type="chains" value="A=1-729"/>
</dbReference>
<dbReference type="PDB" id="9BIS">
    <property type="method" value="EM"/>
    <property type="resolution" value="3.20 A"/>
    <property type="chains" value="A=1-729"/>
</dbReference>
<dbReference type="PDB" id="9BIT">
    <property type="method" value="EM"/>
    <property type="resolution" value="3.10 A"/>
    <property type="chains" value="A=1-729"/>
</dbReference>
<dbReference type="PDB" id="9BIU">
    <property type="method" value="EM"/>
    <property type="resolution" value="2.90 A"/>
    <property type="chains" value="A=1-729"/>
</dbReference>
<dbReference type="PDBsum" id="5A9H"/>
<dbReference type="PDBsum" id="5A9I"/>
<dbReference type="PDBsum" id="7NQK"/>
<dbReference type="PDBsum" id="9BIR"/>
<dbReference type="PDBsum" id="9BIS"/>
<dbReference type="PDBsum" id="9BIT"/>
<dbReference type="PDBsum" id="9BIU"/>
<dbReference type="EMDB" id="EMD-12528"/>
<dbReference type="EMDB" id="EMD-44599"/>
<dbReference type="EMDB" id="EMD-44600"/>
<dbReference type="EMDB" id="EMD-44601"/>
<dbReference type="EMDB" id="EMD-44602"/>
<dbReference type="SMR" id="Q63424"/>
<dbReference type="FunCoup" id="Q63424">
    <property type="interactions" value="53"/>
</dbReference>
<dbReference type="STRING" id="10116.ENSRNOP00000003189"/>
<dbReference type="BindingDB" id="Q63424"/>
<dbReference type="ChEMBL" id="CHEMBL3325"/>
<dbReference type="GlyCosmos" id="Q63424">
    <property type="glycosylation" value="4 sites, No reported glycans"/>
</dbReference>
<dbReference type="GlyGen" id="Q63424">
    <property type="glycosylation" value="4 sites"/>
</dbReference>
<dbReference type="iPTMnet" id="Q63424"/>
<dbReference type="PhosphoSitePlus" id="Q63424"/>
<dbReference type="PaxDb" id="10116-ENSRNOP00000003189"/>
<dbReference type="UCSC" id="RGD:61972">
    <property type="organism name" value="rat"/>
</dbReference>
<dbReference type="AGR" id="RGD:61972"/>
<dbReference type="RGD" id="61972">
    <property type="gene designation" value="Slc15a2"/>
</dbReference>
<dbReference type="eggNOG" id="KOG1237">
    <property type="taxonomic scope" value="Eukaryota"/>
</dbReference>
<dbReference type="HOGENOM" id="CLU_004790_3_0_1"/>
<dbReference type="InParanoid" id="Q63424"/>
<dbReference type="PhylomeDB" id="Q63424"/>
<dbReference type="BRENDA" id="7.4.2.5">
    <property type="organism ID" value="5301"/>
</dbReference>
<dbReference type="EvolutionaryTrace" id="Q63424"/>
<dbReference type="PRO" id="PR:Q63424"/>
<dbReference type="Proteomes" id="UP000002494">
    <property type="component" value="Unplaced"/>
</dbReference>
<dbReference type="GO" id="GO:0016324">
    <property type="term" value="C:apical plasma membrane"/>
    <property type="evidence" value="ECO:0000314"/>
    <property type="project" value="UniProtKB"/>
</dbReference>
<dbReference type="GO" id="GO:0016020">
    <property type="term" value="C:membrane"/>
    <property type="evidence" value="ECO:0000266"/>
    <property type="project" value="RGD"/>
</dbReference>
<dbReference type="GO" id="GO:0030670">
    <property type="term" value="C:phagocytic vesicle membrane"/>
    <property type="evidence" value="ECO:0000266"/>
    <property type="project" value="RGD"/>
</dbReference>
<dbReference type="GO" id="GO:0005886">
    <property type="term" value="C:plasma membrane"/>
    <property type="evidence" value="ECO:0000250"/>
    <property type="project" value="UniProtKB"/>
</dbReference>
<dbReference type="GO" id="GO:0071916">
    <property type="term" value="F:dipeptide transmembrane transporter activity"/>
    <property type="evidence" value="ECO:0000314"/>
    <property type="project" value="UniProtKB"/>
</dbReference>
<dbReference type="GO" id="GO:0015334">
    <property type="term" value="F:high-affinity oligopeptide transmembrane transporter activity"/>
    <property type="evidence" value="ECO:0000266"/>
    <property type="project" value="RGD"/>
</dbReference>
<dbReference type="GO" id="GO:0015333">
    <property type="term" value="F:peptide:proton symporter activity"/>
    <property type="evidence" value="ECO:0000314"/>
    <property type="project" value="UniProtKB"/>
</dbReference>
<dbReference type="GO" id="GO:0042937">
    <property type="term" value="F:tripeptide transmembrane transporter activity"/>
    <property type="evidence" value="ECO:0000314"/>
    <property type="project" value="UniProtKB"/>
</dbReference>
<dbReference type="GO" id="GO:0140367">
    <property type="term" value="P:antibacterial innate immune response"/>
    <property type="evidence" value="ECO:0000266"/>
    <property type="project" value="RGD"/>
</dbReference>
<dbReference type="GO" id="GO:0140206">
    <property type="term" value="P:dipeptide import across plasma membrane"/>
    <property type="evidence" value="ECO:0000314"/>
    <property type="project" value="UniProtKB"/>
</dbReference>
<dbReference type="GO" id="GO:0042938">
    <property type="term" value="P:dipeptide transport"/>
    <property type="evidence" value="ECO:0000314"/>
    <property type="project" value="RGD"/>
</dbReference>
<dbReference type="GO" id="GO:0072237">
    <property type="term" value="P:metanephric proximal tubule development"/>
    <property type="evidence" value="ECO:0000270"/>
    <property type="project" value="RGD"/>
</dbReference>
<dbReference type="GO" id="GO:0006857">
    <property type="term" value="P:oligopeptide transport"/>
    <property type="evidence" value="ECO:0000266"/>
    <property type="project" value="RGD"/>
</dbReference>
<dbReference type="GO" id="GO:0015835">
    <property type="term" value="P:peptidoglycan transport"/>
    <property type="evidence" value="ECO:0000250"/>
    <property type="project" value="UniProtKB"/>
</dbReference>
<dbReference type="GO" id="GO:0015031">
    <property type="term" value="P:protein transport"/>
    <property type="evidence" value="ECO:0007669"/>
    <property type="project" value="UniProtKB-KW"/>
</dbReference>
<dbReference type="GO" id="GO:0070424">
    <property type="term" value="P:regulation of nucleotide-binding domain, leucine rich repeat containing receptor signaling pathway"/>
    <property type="evidence" value="ECO:0000250"/>
    <property type="project" value="UniProtKB"/>
</dbReference>
<dbReference type="GO" id="GO:0070293">
    <property type="term" value="P:renal absorption"/>
    <property type="evidence" value="ECO:0000266"/>
    <property type="project" value="RGD"/>
</dbReference>
<dbReference type="GO" id="GO:0140207">
    <property type="term" value="P:tripeptide import across plasma membrane"/>
    <property type="evidence" value="ECO:0000314"/>
    <property type="project" value="UniProtKB"/>
</dbReference>
<dbReference type="GO" id="GO:0042908">
    <property type="term" value="P:xenobiotic transport"/>
    <property type="evidence" value="ECO:0000266"/>
    <property type="project" value="RGD"/>
</dbReference>
<dbReference type="CDD" id="cd17347">
    <property type="entry name" value="MFS_SLC15A1_2_like"/>
    <property type="match status" value="1"/>
</dbReference>
<dbReference type="FunFam" id="1.20.1250.20:FF:000049">
    <property type="entry name" value="Solute carrier family 15 member 2"/>
    <property type="match status" value="1"/>
</dbReference>
<dbReference type="FunFam" id="1.20.1250.20:FF:000158">
    <property type="entry name" value="Solute carrier family 15 member 2"/>
    <property type="match status" value="1"/>
</dbReference>
<dbReference type="Gene3D" id="1.20.1250.20">
    <property type="entry name" value="MFS general substrate transporter like domains"/>
    <property type="match status" value="2"/>
</dbReference>
<dbReference type="InterPro" id="IPR029028">
    <property type="entry name" value="Alpha/beta_knot_MTases"/>
</dbReference>
<dbReference type="InterPro" id="IPR036259">
    <property type="entry name" value="MFS_trans_sf"/>
</dbReference>
<dbReference type="InterPro" id="IPR004768">
    <property type="entry name" value="Oligopep_transport"/>
</dbReference>
<dbReference type="InterPro" id="IPR000109">
    <property type="entry name" value="POT_fam"/>
</dbReference>
<dbReference type="InterPro" id="IPR018456">
    <property type="entry name" value="PTR2_symporter_CS"/>
</dbReference>
<dbReference type="NCBIfam" id="TIGR00926">
    <property type="entry name" value="2A1704"/>
    <property type="match status" value="1"/>
</dbReference>
<dbReference type="PANTHER" id="PTHR11654">
    <property type="entry name" value="OLIGOPEPTIDE TRANSPORTER-RELATED"/>
    <property type="match status" value="1"/>
</dbReference>
<dbReference type="Pfam" id="PF00854">
    <property type="entry name" value="PTR2"/>
    <property type="match status" value="2"/>
</dbReference>
<dbReference type="SUPFAM" id="SSF75217">
    <property type="entry name" value="alpha/beta knot"/>
    <property type="match status" value="1"/>
</dbReference>
<dbReference type="SUPFAM" id="SSF103473">
    <property type="entry name" value="MFS general substrate transporter"/>
    <property type="match status" value="1"/>
</dbReference>
<dbReference type="PROSITE" id="PS01022">
    <property type="entry name" value="PTR2_1"/>
    <property type="match status" value="1"/>
</dbReference>
<dbReference type="PROSITE" id="PS01023">
    <property type="entry name" value="PTR2_2"/>
    <property type="match status" value="1"/>
</dbReference>
<reference key="1">
    <citation type="journal article" date="1996" name="Biochim. Biophys. Acta">
        <title>Molecular cloning and tissue distribution of rat peptide transporter PEPT2.</title>
        <authorList>
            <person name="Saito H."/>
            <person name="Terada T."/>
            <person name="Okuda M."/>
            <person name="Sasaki S."/>
            <person name="Inui K."/>
        </authorList>
    </citation>
    <scope>NUCLEOTIDE SEQUENCE [MRNA]</scope>
    <scope>FUNCTION</scope>
    <scope>TRANSPORTER ACTIVITY</scope>
    <scope>SUBCELLULAR LOCATION</scope>
    <scope>TISSUE SPECIFICITY</scope>
    <source>
        <strain>Sprague-Dawley</strain>
        <tissue>Kidney</tissue>
    </source>
</reference>
<reference key="2">
    <citation type="journal article" date="1999" name="J. Biol. Chem.">
        <title>Stoichiometry and kinetics of the high-affinity H+-coupled peptide transporter PepT2.</title>
        <authorList>
            <person name="Chen X.Z."/>
            <person name="Zhu T."/>
            <person name="Smith D.E."/>
            <person name="Hediger M.A."/>
        </authorList>
    </citation>
    <scope>FUNCTION</scope>
    <scope>TRANSPORTER ACTIVITY</scope>
    <scope>BIOPHYSICOCHEMICAL PROPERTIES</scope>
</reference>
<reference key="3">
    <citation type="journal article" date="2004" name="J. Neurochem.">
        <title>Carnosine uptake in rat choroid plexus primary cell cultures and choroid plexus whole tissue from PEPT2 null mice.</title>
        <authorList>
            <person name="Teuscher N.S."/>
            <person name="Shen H."/>
            <person name="Shu C."/>
            <person name="Xiang J."/>
            <person name="Keep R.F."/>
            <person name="Smith D.E."/>
        </authorList>
    </citation>
    <scope>FUNCTION</scope>
    <scope>TRANSPORTER ACTIVITY</scope>
    <scope>TISSUE SPECIFICITY</scope>
    <scope>SUBCELLULAR LOCATION</scope>
    <scope>BIOPHYSICOCHEMICAL PROPERTIES</scope>
</reference>
<reference key="4">
    <citation type="journal article" date="2012" name="Nat. Commun.">
        <title>Quantitative maps of protein phosphorylation sites across 14 different rat organs and tissues.</title>
        <authorList>
            <person name="Lundby A."/>
            <person name="Secher A."/>
            <person name="Lage K."/>
            <person name="Nordsborg N.B."/>
            <person name="Dmytriyev A."/>
            <person name="Lundby C."/>
            <person name="Olsen J.V."/>
        </authorList>
    </citation>
    <scope>PHOSPHORYLATION [LARGE SCALE ANALYSIS] AT SER-28</scope>
    <scope>IDENTIFICATION BY MASS SPECTROMETRY [LARGE SCALE ANALYSIS]</scope>
</reference>
<reference evidence="18 19" key="5">
    <citation type="journal article" date="2015" name="Structure">
        <title>Crystal structures of the extracellular domain from PepT1 and PepT2 provide novel insights into mammalian peptide transport.</title>
        <authorList>
            <person name="Beale J.H."/>
            <person name="Parker J.L."/>
            <person name="Samsudin F."/>
            <person name="Barrett A.L."/>
            <person name="Senan A."/>
            <person name="Bird L.E."/>
            <person name="Scott D."/>
            <person name="Owens R.J."/>
            <person name="Sansom M.S.P."/>
            <person name="Tucker S.J."/>
            <person name="Meredith D."/>
            <person name="Fowler P.W."/>
            <person name="Newstead S."/>
        </authorList>
    </citation>
    <scope>X-RAY CRYSTALLOGRAPHY (2.06 ANGSTROMS) OF 410-601</scope>
    <scope>DOMAIN</scope>
    <scope>INTERACTION WITH TRYPSIN</scope>
</reference>
<reference evidence="20" key="6">
    <citation type="journal article" date="2021" name="Sci. Adv.">
        <title>Cryo-EM structure of PepT2 reveals structural basis for proton-coupled peptide and prodrug transport in mammals.</title>
        <authorList>
            <person name="Parker J.L."/>
            <person name="Deme J.C."/>
            <person name="Wu Z."/>
            <person name="Kuteyi G."/>
            <person name="Huo J."/>
            <person name="Owens R.J."/>
            <person name="Biggin P.C."/>
            <person name="Lea S.M."/>
            <person name="Newstead S."/>
        </authorList>
    </citation>
    <scope>STRUCTURE BY ELECTRON MICROSCOPY (3.50 ANGSTROMS)</scope>
    <scope>BIOPHYSICOCHEMICAL PROPERTIES</scope>
    <scope>MUTAGENESIS OF ASP-170 AND LYS-642</scope>
    <scope>TRANSPORTER ACTIVITY</scope>
</reference>
<proteinExistence type="evidence at protein level"/>
<organism>
    <name type="scientific">Rattus norvegicus</name>
    <name type="common">Rat</name>
    <dbReference type="NCBI Taxonomy" id="10116"/>
    <lineage>
        <taxon>Eukaryota</taxon>
        <taxon>Metazoa</taxon>
        <taxon>Chordata</taxon>
        <taxon>Craniata</taxon>
        <taxon>Vertebrata</taxon>
        <taxon>Euteleostomi</taxon>
        <taxon>Mammalia</taxon>
        <taxon>Eutheria</taxon>
        <taxon>Euarchontoglires</taxon>
        <taxon>Glires</taxon>
        <taxon>Rodentia</taxon>
        <taxon>Myomorpha</taxon>
        <taxon>Muroidea</taxon>
        <taxon>Muridae</taxon>
        <taxon>Murinae</taxon>
        <taxon>Rattus</taxon>
    </lineage>
</organism>
<comment type="function">
    <text evidence="2 7 10">Proton-coupled amino-acid transporter that transports oligopeptides of 2 to 4 amino acids with a preference for dipeptides (PubMed:8639691). Transports neutral and anionic dipeptides with a proton to peptide stoichiometry of 2:1 or 3:1 (PubMed:8639691). In kidney, involved in the absorption of circulating di- and tripeptides from the glomerular filtrate. Can also transport beta-lactam antibiotics, such as the aminocephalosporin cefadroxil, and other antiviral and anticancer drugs (By similarity). Transports the dipeptide-like aminopeptidase inhibitor bestatin (By similarity). Also able to transport carnosine (PubMed:15056281). Involved in innate immunity by promoting the detection of microbial pathogens by NOD-like receptors (NLRs) (By similarity). Mediates transport of bacterial peptidoglycans across the plasma membrane or, in macrophages, the phagosome membrane: catalyzes the transport of certain bacterial peptidoglycans, such as muramyl dipeptide (MDP), the NOD2 ligand (By similarity).</text>
</comment>
<comment type="catalytic activity">
    <reaction evidence="7 9 10 11">
        <text>a dipeptide(out) + 2 H(+)(out) = a dipeptide(in) + 2 H(+)(in)</text>
        <dbReference type="Rhea" id="RHEA:76179"/>
        <dbReference type="ChEBI" id="CHEBI:15378"/>
        <dbReference type="ChEBI" id="CHEBI:90799"/>
    </reaction>
    <physiologicalReaction direction="left-to-right" evidence="7">
        <dbReference type="Rhea" id="RHEA:76180"/>
    </physiologicalReaction>
</comment>
<comment type="catalytic activity">
    <reaction evidence="11">
        <text>glycyl-L-leucine(out) + 2 H(+)(out) = glycyl-L-leucine(in) + 2 H(+)(in)</text>
        <dbReference type="Rhea" id="RHEA:76167"/>
        <dbReference type="ChEBI" id="CHEBI:15378"/>
        <dbReference type="ChEBI" id="CHEBI:143163"/>
    </reaction>
    <physiologicalReaction direction="left-to-right" evidence="16">
        <dbReference type="Rhea" id="RHEA:76168"/>
    </physiologicalReaction>
</comment>
<comment type="catalytic activity">
    <reaction evidence="11">
        <text>glycyl-L-lysine(out) + 2 H(+)(out) = glycyl-L-lysine(in) + 2 H(+)(in)</text>
        <dbReference type="Rhea" id="RHEA:76171"/>
        <dbReference type="ChEBI" id="CHEBI:15378"/>
        <dbReference type="ChEBI" id="CHEBI:194323"/>
    </reaction>
    <physiologicalReaction direction="left-to-right" evidence="16">
        <dbReference type="Rhea" id="RHEA:76172"/>
    </physiologicalReaction>
</comment>
<comment type="catalytic activity">
    <reaction evidence="11">
        <text>glycyl-L-glutamate(out) + 3 H(+)(out) = glycyl-L-glutamate(in) + 3 H(+)(in)</text>
        <dbReference type="Rhea" id="RHEA:76175"/>
        <dbReference type="ChEBI" id="CHEBI:15378"/>
        <dbReference type="ChEBI" id="CHEBI:73784"/>
    </reaction>
    <physiologicalReaction direction="left-to-right" evidence="16">
        <dbReference type="Rhea" id="RHEA:76176"/>
    </physiologicalReaction>
</comment>
<comment type="catalytic activity">
    <reaction evidence="9">
        <text>L-alanyl-L-alanine(out) + 2 H(+)(out) = L-alanyl-L-alanine(in) + 2 H(+)(in)</text>
        <dbReference type="Rhea" id="RHEA:76183"/>
        <dbReference type="ChEBI" id="CHEBI:15378"/>
        <dbReference type="ChEBI" id="CHEBI:195181"/>
    </reaction>
    <physiologicalReaction direction="left-to-right" evidence="15">
        <dbReference type="Rhea" id="RHEA:76184"/>
    </physiologicalReaction>
</comment>
<comment type="catalytic activity">
    <reaction evidence="9">
        <text>an L-amino acid tripeptide(out) + 2 H(+)(out) = an L-amino acid tripeptide(in) + 2 H(+)(in)</text>
        <dbReference type="Rhea" id="RHEA:76187"/>
        <dbReference type="ChEBI" id="CHEBI:15378"/>
        <dbReference type="ChEBI" id="CHEBI:155837"/>
    </reaction>
    <physiologicalReaction direction="left-to-right" evidence="15">
        <dbReference type="Rhea" id="RHEA:76188"/>
    </physiologicalReaction>
</comment>
<comment type="catalytic activity">
    <reaction evidence="2">
        <text>N-acetyl-D-muramoyl-L-alanyl-D-isoglutamine(out) + 3 H(+)(out) = N-acetyl-D-muramoyl-L-alanyl-D-isoglutamine(in) + 3 H(+)(in)</text>
        <dbReference type="Rhea" id="RHEA:76375"/>
        <dbReference type="ChEBI" id="CHEBI:15378"/>
        <dbReference type="ChEBI" id="CHEBI:155830"/>
    </reaction>
    <physiologicalReaction direction="left-to-right" evidence="2">
        <dbReference type="Rhea" id="RHEA:76376"/>
    </physiologicalReaction>
</comment>
<comment type="catalytic activity">
    <reaction evidence="7">
        <text>carnosine(out) + 2 H(+)(out) = carnosine(in) + 2 H(+)(in)</text>
        <dbReference type="Rhea" id="RHEA:76191"/>
        <dbReference type="ChEBI" id="CHEBI:15378"/>
        <dbReference type="ChEBI" id="CHEBI:57485"/>
    </reaction>
    <physiologicalReaction direction="left-to-right" evidence="7">
        <dbReference type="Rhea" id="RHEA:76192"/>
    </physiologicalReaction>
</comment>
<comment type="biophysicochemical properties">
    <kinetics>
        <KM evidence="11">48 uM for phenylalanine-L-glutamate (at pH6 and membrane potential -50mV)</KM>
        <KM evidence="11">520 uM for phenylalanine-L-glutamate (at pH6 and membrane potential -160mV)</KM>
        <KM evidence="11">75 uM for phenylalanine-L-alanine (at pH6 and membrane potential -50mV)</KM>
        <KM evidence="11">570 uM for phenylalanine-L-alanine (at pH6 and membrane potential -160mV)</KM>
        <KM evidence="11">135 uM for phenylalanine-L-lysine (at pH6 and membrane potential -50mV)</KM>
        <KM evidence="11">890 uM for phenylalanine-L-lysine (at pH6 and membrane potential -160mV)</KM>
        <KM evidence="11">16 uM for glycyl-L-glutamate (at pH6 and membrane potential -50mV)</KM>
        <KM evidence="11">490 uM for glycyl-L-glutamate (at pH6 and membrane potential -160mV)</KM>
        <KM evidence="11">4.4 uM for glycyl-L-leucine (at pH6 and membrane potential -50mV)</KM>
        <KM evidence="11">30 uM for glycyl-L-leucine (at pH6 and membrane potential -160mV)</KM>
        <KM evidence="11">51 uM for glycyl-L-lysine (at pH6 and membrane potential -50mV)</KM>
        <KM evidence="11">560 uM for glycyl-L-lysine (at pH6 and membrane potential -160mV)</KM>
        <KM evidence="7">34 uM for carnosine</KM>
        <Vmax evidence="7">73.0 pmol/min/mg enzyme toward carnosine</Vmax>
    </kinetics>
    <phDependence>
        <text evidence="9">Optimum pH is 7.5.</text>
    </phDependence>
</comment>
<comment type="subunit">
    <text evidence="8">Interacts (via extracellular domain region) with trypsin.</text>
</comment>
<comment type="subcellular location">
    <subcellularLocation>
        <location evidence="7">Apical cell membrane</location>
        <topology evidence="4">Multi-pass membrane protein</topology>
    </subcellularLocation>
    <subcellularLocation>
        <location evidence="2">Cytoplasmic vesicle</location>
        <location evidence="2">Phagosome membrane</location>
        <topology evidence="4">Multi-pass membrane protein</topology>
    </subcellularLocation>
    <subcellularLocation>
        <location evidence="2">Cell membrane</location>
        <topology evidence="4">Multi-pass membrane protein</topology>
    </subcellularLocation>
    <text evidence="2">Associated with the cell membrane in resting macrophages and enriched in phagocytic cups and phagosomes after particle internalization.</text>
</comment>
<comment type="tissue specificity">
    <text evidence="7 10">Strongly expressed in kidney cortex and medulla. Also detected in brain, lung and spleen. Expressed in choroid plexus (PubMed:15056281).</text>
</comment>
<comment type="domain">
    <text evidence="8">The extracellular domain (ECD) region specifically binds trypsin.</text>
</comment>
<comment type="similarity">
    <text evidence="14">Belongs to the major facilitator superfamily. Proton-dependent oligopeptide transporter (POT/PTR) (TC 2.A.17) family.</text>
</comment>
<protein>
    <recommendedName>
        <fullName evidence="14">Solute carrier family 15 member 2</fullName>
    </recommendedName>
    <alternativeName>
        <fullName evidence="1">Kidney H(+)/peptide cotransporter</fullName>
    </alternativeName>
    <alternativeName>
        <fullName evidence="1">Oligopeptide transporter, kidney isoform</fullName>
    </alternativeName>
    <alternativeName>
        <fullName evidence="13">Peptide transporter 2</fullName>
    </alternativeName>
</protein>
<keyword id="KW-0002">3D-structure</keyword>
<keyword id="KW-1003">Cell membrane</keyword>
<keyword id="KW-0968">Cytoplasmic vesicle</keyword>
<keyword id="KW-0325">Glycoprotein</keyword>
<keyword id="KW-0391">Immunity</keyword>
<keyword id="KW-0399">Innate immunity</keyword>
<keyword id="KW-0472">Membrane</keyword>
<keyword id="KW-0571">Peptide transport</keyword>
<keyword id="KW-0597">Phosphoprotein</keyword>
<keyword id="KW-0653">Protein transport</keyword>
<keyword id="KW-1185">Reference proteome</keyword>
<keyword id="KW-0769">Symport</keyword>
<keyword id="KW-0812">Transmembrane</keyword>
<keyword id="KW-1133">Transmembrane helix</keyword>
<keyword id="KW-0813">Transport</keyword>
<sequence length="729" mass="81320">MNPFQKNESKETLFSPVSTEEMLPRPPSPPKKSPPKIFGSSYPVSIAFIVVNEFCERFSYYGMKAVLTLYFLYFLHWNEDTSTSVYHAFSSLCYFTPILGAAIADSWLGKFKTIIYLSLVYVLGHVFKSLGAIPILGGKMLHTILSLVGLSLIALGTGGIKPCVAAFGGDQFEEEHAEARTRYFSVFYLAINAGSLISTFITPMLRGDVKCFGQDCYALAFGVPGLLMVLALVVFAMGSKMYRKPPPEGNIVAQVIKCIWFALCNRFRNRSGDLPKRQHWLDWAAEKYPKHLIADVKALTRVLFLYIPLPMFWALLDQQGSRWTLQANKMNGDLGFFVLQPDQMQVLNPFLVLIFIPLFDLVIYRLISKCRINFSSLRKMAVGMILACLAFAVAALVETKINGMIHPQPASQEIFLQVLNLADGDVKVTVLGSRNNSLLVESVSSFQNTTHYSKLHLEAKSQDLHFHLKYNSLSVHNDHSVEEKNCYQLLIHQDGESISSMLVKDTGIKPANGMAAIRFINTLHKDLNISLDTDAPLSVGKDYGVSAYRTVLRGKYPAVHCETEDKVFSLDLGQLDFGTTYLFVITNITSQGLQAWKAEDIPVNKLSIAWQLPQYVLVTAAEVMFSVTGLEFSYSQAPSSMKSVLQAAWLLTVAVGNIIVLVVAQFSGLAQWAEFVLFSCLLLVVCLIFSVMAYYYVPLKSEDTREATDKQIPAVQGNMINLETKNTRL</sequence>
<name>S15A2_RAT</name>
<feature type="chain" id="PRO_0000064311" description="Solute carrier family 15 member 2">
    <location>
        <begin position="1"/>
        <end position="729"/>
    </location>
</feature>
<feature type="topological domain" description="Cytoplasmic" evidence="14">
    <location>
        <begin position="1"/>
        <end position="57"/>
    </location>
</feature>
<feature type="transmembrane region" description="Helical" evidence="4">
    <location>
        <begin position="58"/>
        <end position="78"/>
    </location>
</feature>
<feature type="topological domain" description="Extracellular" evidence="14">
    <location>
        <begin position="79"/>
        <end position="87"/>
    </location>
</feature>
<feature type="transmembrane region" description="Helical" evidence="4">
    <location>
        <begin position="88"/>
        <end position="108"/>
    </location>
</feature>
<feature type="topological domain" description="Cytoplasmic" evidence="14">
    <location>
        <begin position="109"/>
        <end position="113"/>
    </location>
</feature>
<feature type="transmembrane region" description="Helical" evidence="4">
    <location>
        <begin position="114"/>
        <end position="134"/>
    </location>
</feature>
<feature type="topological domain" description="Extracellular" evidence="14">
    <location>
        <begin position="135"/>
        <end position="139"/>
    </location>
</feature>
<feature type="transmembrane region" description="Helical" evidence="4">
    <location>
        <begin position="140"/>
        <end position="160"/>
    </location>
</feature>
<feature type="topological domain" description="Cytoplasmic" evidence="14">
    <location>
        <begin position="161"/>
        <end position="183"/>
    </location>
</feature>
<feature type="transmembrane region" description="Helical" evidence="4">
    <location>
        <begin position="184"/>
        <end position="204"/>
    </location>
</feature>
<feature type="topological domain" description="Extracellular" evidence="14">
    <location>
        <begin position="205"/>
        <end position="217"/>
    </location>
</feature>
<feature type="transmembrane region" description="Helical" evidence="4">
    <location>
        <begin position="218"/>
        <end position="238"/>
    </location>
</feature>
<feature type="topological domain" description="Cytoplasmic" evidence="14">
    <location>
        <begin position="239"/>
        <end position="295"/>
    </location>
</feature>
<feature type="transmembrane region" description="Helical" evidence="4">
    <location>
        <begin position="296"/>
        <end position="316"/>
    </location>
</feature>
<feature type="topological domain" description="Extracellular" evidence="14">
    <location>
        <begin position="317"/>
        <end position="343"/>
    </location>
</feature>
<feature type="transmembrane region" description="Helical" evidence="4">
    <location>
        <begin position="344"/>
        <end position="364"/>
    </location>
</feature>
<feature type="topological domain" description="Cytoplasmic" evidence="14">
    <location>
        <begin position="365"/>
        <end position="380"/>
    </location>
</feature>
<feature type="transmembrane region" description="Helical" evidence="4">
    <location>
        <begin position="381"/>
        <end position="401"/>
    </location>
</feature>
<feature type="topological domain" description="Extracellular" evidence="14">
    <location>
        <begin position="402"/>
        <end position="611"/>
    </location>
</feature>
<feature type="transmembrane region" description="Helical" evidence="4">
    <location>
        <begin position="612"/>
        <end position="632"/>
    </location>
</feature>
<feature type="topological domain" description="Cytoplasmic" evidence="14">
    <location>
        <begin position="633"/>
        <end position="643"/>
    </location>
</feature>
<feature type="transmembrane region" description="Helical" evidence="4">
    <location>
        <begin position="644"/>
        <end position="664"/>
    </location>
</feature>
<feature type="topological domain" description="Extracellular" evidence="14">
    <location>
        <begin position="665"/>
        <end position="674"/>
    </location>
</feature>
<feature type="transmembrane region" description="Helical" evidence="4">
    <location>
        <begin position="675"/>
        <end position="695"/>
    </location>
</feature>
<feature type="topological domain" description="Cytoplasmic" evidence="14">
    <location>
        <begin position="696"/>
        <end position="729"/>
    </location>
</feature>
<feature type="region of interest" description="Disordered" evidence="6">
    <location>
        <begin position="1"/>
        <end position="35"/>
    </location>
</feature>
<feature type="region of interest" description="Extracellular domain (ECD)" evidence="12">
    <location>
        <begin position="402"/>
        <end position="611"/>
    </location>
</feature>
<feature type="modified residue" description="Phosphoserine" evidence="3">
    <location>
        <position position="9"/>
    </location>
</feature>
<feature type="modified residue" description="Phosphothreonine" evidence="3">
    <location>
        <position position="12"/>
    </location>
</feature>
<feature type="modified residue" description="Phosphoserine" evidence="21">
    <location>
        <position position="28"/>
    </location>
</feature>
<feature type="glycosylation site" description="N-linked (GlcNAc...) asparagine" evidence="5">
    <location>
        <position position="435"/>
    </location>
</feature>
<feature type="glycosylation site" description="N-linked (GlcNAc...) asparagine" evidence="5">
    <location>
        <position position="448"/>
    </location>
</feature>
<feature type="glycosylation site" description="N-linked (GlcNAc...) asparagine" evidence="5">
    <location>
        <position position="528"/>
    </location>
</feature>
<feature type="glycosylation site" description="N-linked (GlcNAc...) asparagine" evidence="4 5">
    <location>
        <position position="587"/>
    </location>
</feature>
<feature type="mutagenesis site" description="Loss of transporter activity, at least for di-alanine. No effect on plasma membrane location." evidence="9">
    <original>D</original>
    <variation>A</variation>
    <location>
        <position position="170"/>
    </location>
</feature>
<feature type="mutagenesis site" description="Loss of transporter activity, at least for di-alanine. No effect on plasma membrane location." evidence="9">
    <original>K</original>
    <variation>A</variation>
    <location>
        <position position="642"/>
    </location>
</feature>
<feature type="strand" evidence="26">
    <location>
        <begin position="40"/>
        <end position="42"/>
    </location>
</feature>
<feature type="helix" evidence="26">
    <location>
        <begin position="44"/>
        <end position="46"/>
    </location>
</feature>
<feature type="helix" evidence="26">
    <location>
        <begin position="47"/>
        <end position="73"/>
    </location>
</feature>
<feature type="helix" evidence="26">
    <location>
        <begin position="79"/>
        <end position="106"/>
    </location>
</feature>
<feature type="turn" evidence="26">
    <location>
        <begin position="110"/>
        <end position="112"/>
    </location>
</feature>
<feature type="helix" evidence="26">
    <location>
        <begin position="113"/>
        <end position="130"/>
    </location>
</feature>
<feature type="strand" evidence="26">
    <location>
        <begin position="134"/>
        <end position="136"/>
    </location>
</feature>
<feature type="helix" evidence="26">
    <location>
        <begin position="141"/>
        <end position="169"/>
    </location>
</feature>
<feature type="helix" evidence="26">
    <location>
        <begin position="177"/>
        <end position="205"/>
    </location>
</feature>
<feature type="strand" evidence="25">
    <location>
        <begin position="206"/>
        <end position="208"/>
    </location>
</feature>
<feature type="strand" evidence="26">
    <location>
        <begin position="210"/>
        <end position="215"/>
    </location>
</feature>
<feature type="helix" evidence="26">
    <location>
        <begin position="217"/>
        <end position="237"/>
    </location>
</feature>
<feature type="helix" evidence="26">
    <location>
        <begin position="238"/>
        <end position="241"/>
    </location>
</feature>
<feature type="helix" evidence="26">
    <location>
        <begin position="251"/>
        <end position="265"/>
    </location>
</feature>
<feature type="strand" evidence="26">
    <location>
        <begin position="278"/>
        <end position="281"/>
    </location>
</feature>
<feature type="strand" evidence="26">
    <location>
        <begin position="286"/>
        <end position="288"/>
    </location>
</feature>
<feature type="helix" evidence="26">
    <location>
        <begin position="290"/>
        <end position="306"/>
    </location>
</feature>
<feature type="helix" evidence="26">
    <location>
        <begin position="309"/>
        <end position="317"/>
    </location>
</feature>
<feature type="turn" evidence="26">
    <location>
        <begin position="318"/>
        <end position="321"/>
    </location>
</feature>
<feature type="helix" evidence="26">
    <location>
        <begin position="322"/>
        <end position="328"/>
    </location>
</feature>
<feature type="strand" evidence="26">
    <location>
        <begin position="335"/>
        <end position="337"/>
    </location>
</feature>
<feature type="helix" evidence="26">
    <location>
        <begin position="342"/>
        <end position="346"/>
    </location>
</feature>
<feature type="helix" evidence="26">
    <location>
        <begin position="347"/>
        <end position="361"/>
    </location>
</feature>
<feature type="helix" evidence="26">
    <location>
        <begin position="363"/>
        <end position="369"/>
    </location>
</feature>
<feature type="helix" evidence="26">
    <location>
        <begin position="378"/>
        <end position="402"/>
    </location>
</feature>
<feature type="strand" evidence="22">
    <location>
        <begin position="413"/>
        <end position="420"/>
    </location>
</feature>
<feature type="strand" evidence="22">
    <location>
        <begin position="422"/>
        <end position="424"/>
    </location>
</feature>
<feature type="strand" evidence="22">
    <location>
        <begin position="426"/>
        <end position="431"/>
    </location>
</feature>
<feature type="strand" evidence="22">
    <location>
        <begin position="437"/>
        <end position="443"/>
    </location>
</feature>
<feature type="strand" evidence="22">
    <location>
        <begin position="453"/>
        <end position="456"/>
    </location>
</feature>
<feature type="strand" evidence="22">
    <location>
        <begin position="458"/>
        <end position="470"/>
    </location>
</feature>
<feature type="strand" evidence="22">
    <location>
        <begin position="473"/>
        <end position="484"/>
    </location>
</feature>
<feature type="strand" evidence="22">
    <location>
        <begin position="486"/>
        <end position="494"/>
    </location>
</feature>
<feature type="strand" evidence="22">
    <location>
        <begin position="497"/>
        <end position="504"/>
    </location>
</feature>
<feature type="strand" evidence="22">
    <location>
        <begin position="514"/>
        <end position="521"/>
    </location>
</feature>
<feature type="strand" evidence="22">
    <location>
        <begin position="523"/>
        <end position="525"/>
    </location>
</feature>
<feature type="strand" evidence="22">
    <location>
        <begin position="527"/>
        <end position="532"/>
    </location>
</feature>
<feature type="strand" evidence="22">
    <location>
        <begin position="537"/>
        <end position="539"/>
    </location>
</feature>
<feature type="turn" evidence="22">
    <location>
        <begin position="541"/>
        <end position="543"/>
    </location>
</feature>
<feature type="strand" evidence="22">
    <location>
        <begin position="549"/>
        <end position="555"/>
    </location>
</feature>
<feature type="strand" evidence="22">
    <location>
        <begin position="557"/>
        <end position="565"/>
    </location>
</feature>
<feature type="strand" evidence="22">
    <location>
        <begin position="567"/>
        <end position="570"/>
    </location>
</feature>
<feature type="strand" evidence="23">
    <location>
        <begin position="573"/>
        <end position="575"/>
    </location>
</feature>
<feature type="strand" evidence="22">
    <location>
        <begin position="580"/>
        <end position="585"/>
    </location>
</feature>
<feature type="turn" evidence="24">
    <location>
        <begin position="589"/>
        <end position="591"/>
    </location>
</feature>
<feature type="strand" evidence="22">
    <location>
        <begin position="595"/>
        <end position="599"/>
    </location>
</feature>
<feature type="helix" evidence="26">
    <location>
        <begin position="612"/>
        <end position="635"/>
    </location>
</feature>
<feature type="helix" evidence="26">
    <location>
        <begin position="639"/>
        <end position="641"/>
    </location>
</feature>
<feature type="helix" evidence="26">
    <location>
        <begin position="642"/>
        <end position="664"/>
    </location>
</feature>
<feature type="helix" evidence="26">
    <location>
        <begin position="671"/>
        <end position="694"/>
    </location>
</feature>